<keyword id="KW-0964">Secreted</keyword>
<keyword id="KW-0843">Virulence</keyword>
<accession>A0A0H2XIE9</accession>
<proteinExistence type="evidence at protein level"/>
<protein>
    <recommendedName>
        <fullName evidence="8">Type VII secretion system extracellular protein B</fullName>
        <shortName evidence="8">Ess extracellular protein B</shortName>
    </recommendedName>
</protein>
<dbReference type="EMBL" id="CP000255">
    <property type="protein sequence ID" value="ABD21833.1"/>
    <property type="molecule type" value="Genomic_DNA"/>
</dbReference>
<dbReference type="RefSeq" id="WP_000509668.1">
    <property type="nucleotide sequence ID" value="NZ_CP027476.1"/>
</dbReference>
<dbReference type="SMR" id="A0A0H2XIE9"/>
<dbReference type="GeneID" id="66838592"/>
<dbReference type="KEGG" id="saa:SAUSA300_0285"/>
<dbReference type="HOGENOM" id="CLU_2248426_0_0_9"/>
<dbReference type="Proteomes" id="UP000001939">
    <property type="component" value="Chromosome"/>
</dbReference>
<dbReference type="GO" id="GO:0005576">
    <property type="term" value="C:extracellular region"/>
    <property type="evidence" value="ECO:0007669"/>
    <property type="project" value="UniProtKB-SubCell"/>
</dbReference>
<dbReference type="InterPro" id="IPR036689">
    <property type="entry name" value="ESAT-6-like_sf"/>
</dbReference>
<dbReference type="InterPro" id="IPR010310">
    <property type="entry name" value="T7SS_ESAT-6-like"/>
</dbReference>
<dbReference type="Pfam" id="PF06013">
    <property type="entry name" value="WXG100"/>
    <property type="match status" value="1"/>
</dbReference>
<dbReference type="SUPFAM" id="SSF140453">
    <property type="entry name" value="EsxAB dimer-like"/>
    <property type="match status" value="1"/>
</dbReference>
<sequence length="104" mass="11510">MGGYKGIKADGGKVDQAKQLAAKTAKDIEACQKQTQQLAEYIEGSDWEGQFANKVKDVLLIMAKFQEELVQPMADHQKAIDNLSQNLAKYDTLSIKQGLDRVNP</sequence>
<name>ESXB_STAA3</name>
<feature type="chain" id="PRO_0000437373" description="Type VII secretion system extracellular protein B">
    <location>
        <begin position="1"/>
        <end position="104"/>
    </location>
</feature>
<feature type="mutagenesis site" description="Complete loss of interaction with EsxD." evidence="6">
    <original>N</original>
    <variation>A</variation>
    <location>
        <position position="53"/>
    </location>
</feature>
<evidence type="ECO:0000250" key="1">
    <source>
        <dbReference type="UniProtKB" id="P0C047"/>
    </source>
</evidence>
<evidence type="ECO:0000250" key="2">
    <source>
        <dbReference type="UniProtKB" id="Q2G182"/>
    </source>
</evidence>
<evidence type="ECO:0000269" key="3">
    <source>
    </source>
</evidence>
<evidence type="ECO:0000269" key="4">
    <source>
    </source>
</evidence>
<evidence type="ECO:0000269" key="5">
    <source>
    </source>
</evidence>
<evidence type="ECO:0000269" key="6">
    <source>
    </source>
</evidence>
<evidence type="ECO:0000303" key="7">
    <source>
    </source>
</evidence>
<evidence type="ECO:0000305" key="8"/>
<evidence type="ECO:0000312" key="9">
    <source>
        <dbReference type="EMBL" id="ABD21833.1"/>
    </source>
</evidence>
<comment type="function">
    <text evidence="1 4 5">Virulence factor that is important for the establishment of infection in the host. EsxB is required for EsxA synthesis as well as secretion (By similarity). Mediates together with EsxA the release of S.aureus from the host cell (PubMed:25047846). Also inhibits host cytokine production and thus modulates dendritic cell-mediated immunity (PubMed:28785545).</text>
</comment>
<comment type="subunit">
    <text evidence="2 3 6">Homodimer. When mixed with EsxA does not form heterodimers (By similarity). Forms heterodimers with EsxD.</text>
</comment>
<comment type="subcellular location">
    <subcellularLocation>
        <location evidence="3 4">Secreted</location>
    </subcellularLocation>
    <text evidence="8">Secreted via the ESAT-6 secretion system (Ess) / type VII secretion system (T7SS).</text>
</comment>
<comment type="disruption phenotype">
    <text evidence="4 5">Increased capacity to promote cytokine release by host dendritic cells (PubMed:28785545). Does not modulate the apoptotic pathways of host cells (PubMed:25047846).</text>
</comment>
<comment type="similarity">
    <text evidence="8">Belongs to the WXG100 family.</text>
</comment>
<gene>
    <name evidence="7" type="primary">esxB</name>
    <name evidence="9" type="ordered locus">SAUSA300_0285</name>
</gene>
<organism>
    <name type="scientific">Staphylococcus aureus (strain USA300)</name>
    <dbReference type="NCBI Taxonomy" id="367830"/>
    <lineage>
        <taxon>Bacteria</taxon>
        <taxon>Bacillati</taxon>
        <taxon>Bacillota</taxon>
        <taxon>Bacilli</taxon>
        <taxon>Bacillales</taxon>
        <taxon>Staphylococcaceae</taxon>
        <taxon>Staphylococcus</taxon>
    </lineage>
</organism>
<reference key="1">
    <citation type="journal article" date="2006" name="Lancet">
        <title>Complete genome sequence of USA300, an epidemic clone of community-acquired meticillin-resistant Staphylococcus aureus.</title>
        <authorList>
            <person name="Diep B.A."/>
            <person name="Gill S.R."/>
            <person name="Chang R.F."/>
            <person name="Phan T.H."/>
            <person name="Chen J.H."/>
            <person name="Davidson M.G."/>
            <person name="Lin F."/>
            <person name="Lin J."/>
            <person name="Carleton H.A."/>
            <person name="Mongodin E.F."/>
            <person name="Sensabaugh G.F."/>
            <person name="Perdreau-Remington F."/>
        </authorList>
    </citation>
    <scope>NUCLEOTIDE SEQUENCE [LARGE SCALE GENOMIC DNA]</scope>
    <source>
        <strain>USA300</strain>
    </source>
</reference>
<reference key="2">
    <citation type="journal article" date="2013" name="Mol. Microbiol.">
        <title>Secretion of atypical protein substrates by the ESAT-6 secretion system of Staphylococcus aureus.</title>
        <authorList>
            <person name="Anderson M."/>
            <person name="Aly K.A."/>
            <person name="Chen Y.H."/>
            <person name="Missiakas D."/>
        </authorList>
    </citation>
    <scope>SUBUNIT</scope>
    <scope>SUBCELLULAR LOCATION</scope>
    <source>
        <strain>USA300</strain>
    </source>
</reference>
<reference key="3">
    <citation type="journal article" date="2014" name="Infect. Immun.">
        <title>Staphylococcal Esx proteins modulate apoptosis and release of intracellular Staphylococcus aureus during infection in epithelial cells.</title>
        <authorList>
            <person name="Korea C.G."/>
            <person name="Balsamo G."/>
            <person name="Pezzicoli A."/>
            <person name="Merakou C."/>
            <person name="Tavarini S."/>
            <person name="Bagnoli F."/>
            <person name="Serruto D."/>
            <person name="Unnikrishnan M."/>
        </authorList>
    </citation>
    <scope>FUNCTION</scope>
    <scope>DISRUPTION PHENOTYPE</scope>
    <scope>SUBCELLULAR LOCATION</scope>
    <source>
        <strain>USA300</strain>
    </source>
</reference>
<reference key="4">
    <citation type="journal article" date="2017" name="Front. Cell. Infect. Microbiol.">
        <title>Staphylococcus aureus Esx Factors Control Human Dendritic Cell Functions Conditioning Th1/Th17 Response.</title>
        <authorList>
            <person name="Cruciani M."/>
            <person name="Etna M.P."/>
            <person name="Camilli R."/>
            <person name="Giacomini E."/>
            <person name="Percario Z.A."/>
            <person name="Severa M."/>
            <person name="Sandini S."/>
            <person name="Rizzo F."/>
            <person name="Brandi V."/>
            <person name="Balsamo G."/>
            <person name="Polticelli F."/>
            <person name="Affabris E."/>
            <person name="Pantosti A."/>
            <person name="Bagnoli F."/>
            <person name="Coccia E.M."/>
        </authorList>
    </citation>
    <scope>FUNCTION</scope>
    <scope>DISRUPTION PHENOTYPE</scope>
    <source>
        <strain>USA300</strain>
    </source>
</reference>
<reference key="5">
    <citation type="journal article" date="2018" name="Folia Microbiol. (Praha)">
        <title>Error-prone PCR mutagenesis and reverse bacterial two-hybrid screening identify a mutation in asparagine 53 of the Staphylococcus aureus ESAT6-like component EsxB that perturbs interaction with EsxD.</title>
        <authorList>
            <person name="Ibrahim A.M."/>
            <person name="Ragab Y.M."/>
            <person name="Aly K.A."/>
            <person name="Ramadan M.A."/>
        </authorList>
    </citation>
    <scope>INTERACTION WITH ESXD</scope>
    <scope>MUTAGENESIS OF ASN-53</scope>
    <source>
        <strain>USA300</strain>
    </source>
</reference>